<sequence>MRFPSPLIEGRLVRRYKRFLADVALADGTLVTAHCANPGAMLGLNAEGFRVLLSPSTNPARKLGFSWELVEAELPGGPQWVGINTARPNALVAEAFRENKLAPLAGYETLRAEVAYGKASRVDFLASGGGLPPCHVEVKNCHLMRQAGLAEFPDCKAARSARHMEELAGVVAAGGRAMLIVVIQMRADAFDVARDIDPAFDRALRAALAAGVEAYAYTCAVGPEGVEIAEPVQILTSPASPAGSGTS</sequence>
<feature type="chain" id="PRO_1000093577" description="Sugar fermentation stimulation protein homolog">
    <location>
        <begin position="1"/>
        <end position="247"/>
    </location>
</feature>
<gene>
    <name evidence="1" type="primary">sfsA</name>
    <name type="ordered locus">Mpop_0443</name>
</gene>
<accession>B1ZJ47</accession>
<reference key="1">
    <citation type="submission" date="2008-04" db="EMBL/GenBank/DDBJ databases">
        <title>Complete sequence of chromosome of Methylobacterium populi BJ001.</title>
        <authorList>
            <consortium name="US DOE Joint Genome Institute"/>
            <person name="Copeland A."/>
            <person name="Lucas S."/>
            <person name="Lapidus A."/>
            <person name="Glavina del Rio T."/>
            <person name="Dalin E."/>
            <person name="Tice H."/>
            <person name="Bruce D."/>
            <person name="Goodwin L."/>
            <person name="Pitluck S."/>
            <person name="Chertkov O."/>
            <person name="Brettin T."/>
            <person name="Detter J.C."/>
            <person name="Han C."/>
            <person name="Kuske C.R."/>
            <person name="Schmutz J."/>
            <person name="Larimer F."/>
            <person name="Land M."/>
            <person name="Hauser L."/>
            <person name="Kyrpides N."/>
            <person name="Mikhailova N."/>
            <person name="Marx C."/>
            <person name="Richardson P."/>
        </authorList>
    </citation>
    <scope>NUCLEOTIDE SEQUENCE [LARGE SCALE GENOMIC DNA]</scope>
    <source>
        <strain>ATCC BAA-705 / NCIMB 13946 / BJ001</strain>
    </source>
</reference>
<dbReference type="EMBL" id="CP001029">
    <property type="protein sequence ID" value="ACB78621.1"/>
    <property type="molecule type" value="Genomic_DNA"/>
</dbReference>
<dbReference type="RefSeq" id="WP_012452380.1">
    <property type="nucleotide sequence ID" value="NC_010725.1"/>
</dbReference>
<dbReference type="SMR" id="B1ZJ47"/>
<dbReference type="STRING" id="441620.Mpop_0443"/>
<dbReference type="KEGG" id="mpo:Mpop_0443"/>
<dbReference type="eggNOG" id="COG1489">
    <property type="taxonomic scope" value="Bacteria"/>
</dbReference>
<dbReference type="HOGENOM" id="CLU_052299_2_0_5"/>
<dbReference type="OrthoDB" id="9802365at2"/>
<dbReference type="Proteomes" id="UP000007136">
    <property type="component" value="Chromosome"/>
</dbReference>
<dbReference type="GO" id="GO:0003677">
    <property type="term" value="F:DNA binding"/>
    <property type="evidence" value="ECO:0007669"/>
    <property type="project" value="InterPro"/>
</dbReference>
<dbReference type="CDD" id="cd22359">
    <property type="entry name" value="SfsA-like_bacterial"/>
    <property type="match status" value="1"/>
</dbReference>
<dbReference type="Gene3D" id="2.40.50.580">
    <property type="match status" value="1"/>
</dbReference>
<dbReference type="Gene3D" id="3.40.1350.60">
    <property type="match status" value="1"/>
</dbReference>
<dbReference type="HAMAP" id="MF_00095">
    <property type="entry name" value="SfsA"/>
    <property type="match status" value="1"/>
</dbReference>
<dbReference type="InterPro" id="IPR005224">
    <property type="entry name" value="SfsA"/>
</dbReference>
<dbReference type="InterPro" id="IPR040452">
    <property type="entry name" value="SfsA_C"/>
</dbReference>
<dbReference type="InterPro" id="IPR041465">
    <property type="entry name" value="SfsA_N"/>
</dbReference>
<dbReference type="NCBIfam" id="TIGR00230">
    <property type="entry name" value="sfsA"/>
    <property type="match status" value="1"/>
</dbReference>
<dbReference type="PANTHER" id="PTHR30545">
    <property type="entry name" value="SUGAR FERMENTATION STIMULATION PROTEIN A"/>
    <property type="match status" value="1"/>
</dbReference>
<dbReference type="PANTHER" id="PTHR30545:SF2">
    <property type="entry name" value="SUGAR FERMENTATION STIMULATION PROTEIN A"/>
    <property type="match status" value="1"/>
</dbReference>
<dbReference type="Pfam" id="PF03749">
    <property type="entry name" value="SfsA"/>
    <property type="match status" value="1"/>
</dbReference>
<dbReference type="Pfam" id="PF17746">
    <property type="entry name" value="SfsA_N"/>
    <property type="match status" value="1"/>
</dbReference>
<comment type="similarity">
    <text evidence="1">Belongs to the SfsA family.</text>
</comment>
<organism>
    <name type="scientific">Methylorubrum populi (strain ATCC BAA-705 / NCIMB 13946 / BJ001)</name>
    <name type="common">Methylobacterium populi</name>
    <dbReference type="NCBI Taxonomy" id="441620"/>
    <lineage>
        <taxon>Bacteria</taxon>
        <taxon>Pseudomonadati</taxon>
        <taxon>Pseudomonadota</taxon>
        <taxon>Alphaproteobacteria</taxon>
        <taxon>Hyphomicrobiales</taxon>
        <taxon>Methylobacteriaceae</taxon>
        <taxon>Methylorubrum</taxon>
    </lineage>
</organism>
<protein>
    <recommendedName>
        <fullName evidence="1">Sugar fermentation stimulation protein homolog</fullName>
    </recommendedName>
</protein>
<name>SFSA_METPB</name>
<evidence type="ECO:0000255" key="1">
    <source>
        <dbReference type="HAMAP-Rule" id="MF_00095"/>
    </source>
</evidence>
<proteinExistence type="inferred from homology"/>